<name>SGF11_EREGS</name>
<gene>
    <name evidence="1" type="primary">SGF11</name>
    <name type="ordered locus">AGL255W</name>
</gene>
<reference key="1">
    <citation type="journal article" date="2004" name="Science">
        <title>The Ashbya gossypii genome as a tool for mapping the ancient Saccharomyces cerevisiae genome.</title>
        <authorList>
            <person name="Dietrich F.S."/>
            <person name="Voegeli S."/>
            <person name="Brachat S."/>
            <person name="Lerch A."/>
            <person name="Gates K."/>
            <person name="Steiner S."/>
            <person name="Mohr C."/>
            <person name="Poehlmann R."/>
            <person name="Luedi P."/>
            <person name="Choi S."/>
            <person name="Wing R.A."/>
            <person name="Flavier A."/>
            <person name="Gaffney T.D."/>
            <person name="Philippsen P."/>
        </authorList>
    </citation>
    <scope>NUCLEOTIDE SEQUENCE [LARGE SCALE GENOMIC DNA]</scope>
    <source>
        <strain>ATCC 10895 / CBS 109.51 / FGSC 9923 / NRRL Y-1056</strain>
    </source>
</reference>
<reference key="2">
    <citation type="journal article" date="2013" name="G3 (Bethesda)">
        <title>Genomes of Ashbya fungi isolated from insects reveal four mating-type loci, numerous translocations, lack of transposons, and distinct gene duplications.</title>
        <authorList>
            <person name="Dietrich F.S."/>
            <person name="Voegeli S."/>
            <person name="Kuo S."/>
            <person name="Philippsen P."/>
        </authorList>
    </citation>
    <scope>GENOME REANNOTATION</scope>
    <source>
        <strain>ATCC 10895 / CBS 109.51 / FGSC 9923 / NRRL Y-1056</strain>
    </source>
</reference>
<evidence type="ECO:0000255" key="1">
    <source>
        <dbReference type="HAMAP-Rule" id="MF_03047"/>
    </source>
</evidence>
<proteinExistence type="inferred from homology"/>
<organism>
    <name type="scientific">Eremothecium gossypii (strain ATCC 10895 / CBS 109.51 / FGSC 9923 / NRRL Y-1056)</name>
    <name type="common">Yeast</name>
    <name type="synonym">Ashbya gossypii</name>
    <dbReference type="NCBI Taxonomy" id="284811"/>
    <lineage>
        <taxon>Eukaryota</taxon>
        <taxon>Fungi</taxon>
        <taxon>Dikarya</taxon>
        <taxon>Ascomycota</taxon>
        <taxon>Saccharomycotina</taxon>
        <taxon>Saccharomycetes</taxon>
        <taxon>Saccharomycetales</taxon>
        <taxon>Saccharomycetaceae</taxon>
        <taxon>Eremothecium</taxon>
    </lineage>
</organism>
<accession>Q751G1</accession>
<sequence length="105" mass="11831">MTLGRDAMTPLTILSVSETIYHNLLTSMVQDIVSRTTSRQQLQDARYPGLAPLHHDQRGALDVYGRPKPQEASVYFRCPNCSRDLSANRFAAHLERCMSRGARRG</sequence>
<dbReference type="EMBL" id="AE016820">
    <property type="protein sequence ID" value="AAS54236.1"/>
    <property type="molecule type" value="Genomic_DNA"/>
</dbReference>
<dbReference type="RefSeq" id="NP_986412.1">
    <property type="nucleotide sequence ID" value="NM_211474.1"/>
</dbReference>
<dbReference type="SMR" id="Q751G1"/>
<dbReference type="FunCoup" id="Q751G1">
    <property type="interactions" value="314"/>
</dbReference>
<dbReference type="STRING" id="284811.Q751G1"/>
<dbReference type="EnsemblFungi" id="AAS54236">
    <property type="protein sequence ID" value="AAS54236"/>
    <property type="gene ID" value="AGOS_AGL255W"/>
</dbReference>
<dbReference type="GeneID" id="4622705"/>
<dbReference type="KEGG" id="ago:AGOS_AGL255W"/>
<dbReference type="eggNOG" id="KOG2612">
    <property type="taxonomic scope" value="Eukaryota"/>
</dbReference>
<dbReference type="HOGENOM" id="CLU_2320099_0_0_1"/>
<dbReference type="InParanoid" id="Q751G1"/>
<dbReference type="OMA" id="SSQYFHC"/>
<dbReference type="OrthoDB" id="21557at2759"/>
<dbReference type="Proteomes" id="UP000000591">
    <property type="component" value="Chromosome VII"/>
</dbReference>
<dbReference type="GO" id="GO:0071819">
    <property type="term" value="C:DUBm complex"/>
    <property type="evidence" value="ECO:0007669"/>
    <property type="project" value="UniProtKB-UniRule"/>
</dbReference>
<dbReference type="GO" id="GO:0000124">
    <property type="term" value="C:SAGA complex"/>
    <property type="evidence" value="ECO:0007669"/>
    <property type="project" value="UniProtKB-UniRule"/>
</dbReference>
<dbReference type="GO" id="GO:0046695">
    <property type="term" value="C:SLIK (SAGA-like) complex"/>
    <property type="evidence" value="ECO:0007669"/>
    <property type="project" value="EnsemblFungi"/>
</dbReference>
<dbReference type="GO" id="GO:0008047">
    <property type="term" value="F:enzyme activator activity"/>
    <property type="evidence" value="ECO:0007669"/>
    <property type="project" value="EnsemblFungi"/>
</dbReference>
<dbReference type="GO" id="GO:0003713">
    <property type="term" value="F:transcription coactivator activity"/>
    <property type="evidence" value="ECO:0007669"/>
    <property type="project" value="UniProtKB-UniRule"/>
</dbReference>
<dbReference type="GO" id="GO:0008270">
    <property type="term" value="F:zinc ion binding"/>
    <property type="evidence" value="ECO:0007669"/>
    <property type="project" value="UniProtKB-UniRule"/>
</dbReference>
<dbReference type="GO" id="GO:0006325">
    <property type="term" value="P:chromatin organization"/>
    <property type="evidence" value="ECO:0007669"/>
    <property type="project" value="UniProtKB-KW"/>
</dbReference>
<dbReference type="GO" id="GO:0006357">
    <property type="term" value="P:regulation of transcription by RNA polymerase II"/>
    <property type="evidence" value="ECO:0007669"/>
    <property type="project" value="EnsemblFungi"/>
</dbReference>
<dbReference type="FunFam" id="3.30.160.60:FF:000118">
    <property type="entry name" value="Ataxin-7-like protein 3"/>
    <property type="match status" value="1"/>
</dbReference>
<dbReference type="Gene3D" id="1.10.287.210">
    <property type="match status" value="1"/>
</dbReference>
<dbReference type="Gene3D" id="3.30.160.60">
    <property type="entry name" value="Classic Zinc Finger"/>
    <property type="match status" value="1"/>
</dbReference>
<dbReference type="HAMAP" id="MF_03047">
    <property type="entry name" value="Sgf11"/>
    <property type="match status" value="1"/>
</dbReference>
<dbReference type="InterPro" id="IPR013246">
    <property type="entry name" value="SAGA_su_Sgf11"/>
</dbReference>
<dbReference type="InterPro" id="IPR041216">
    <property type="entry name" value="Sgf11_N"/>
</dbReference>
<dbReference type="PANTHER" id="PTHR47674">
    <property type="entry name" value="SAGA-ASSOCIATED FACTOR 11"/>
    <property type="match status" value="1"/>
</dbReference>
<dbReference type="PANTHER" id="PTHR47674:SF3">
    <property type="entry name" value="SAGA-ASSOCIATED FACTOR 11"/>
    <property type="match status" value="1"/>
</dbReference>
<dbReference type="Pfam" id="PF08209">
    <property type="entry name" value="Sgf11"/>
    <property type="match status" value="1"/>
</dbReference>
<dbReference type="Pfam" id="PF18519">
    <property type="entry name" value="Sgf11_N"/>
    <property type="match status" value="1"/>
</dbReference>
<protein>
    <recommendedName>
        <fullName evidence="1">SAGA-associated factor 11</fullName>
    </recommendedName>
</protein>
<comment type="function">
    <text evidence="1">Functions as a component of the transcription regulatory histone acetylation (HAT) complex SAGA. At the promoters, SAGA is required for recruitment of the basal transcription machinery. It influences RNA polymerase II transcriptional activity through different activities such as TBP interaction and promoter selectivity, interaction with transcription activators, and chromatin modification through histone acetylation and deubiquitination. SAGA acetylates nucleosomal histone H3 to some extent (to form H3K9ac, H3K14ac, H3K18ac and H3K23ac). SAGA interacts with DNA via upstream activating sequences (UASs). Involved in transcriptional regulation of a subset of SAGA-regulated genes. Within the SAGA complex, participates in a subcomplex, that specifically deubiquitinates histones H2B.</text>
</comment>
<comment type="subunit">
    <text evidence="1">Component of the 1.8 MDa SAGA transcription coactivator-HAT complex. SAGA is built of 5 distinct domains with specialized functions. Within the SAGA complex, SUS1, SGF11, SGF73 and UBP8 form an additional subcomplex of SAGA called the DUB module (deubiquitination module). Interacts directly with SGF73, SUS1 and UBP8.</text>
</comment>
<comment type="subcellular location">
    <subcellularLocation>
        <location evidence="1">Nucleus</location>
    </subcellularLocation>
</comment>
<comment type="domain">
    <text evidence="1">The long N-terminal helix forms part of the 'assembly lobe' of the SAGA deubiquitination module.</text>
</comment>
<comment type="domain">
    <text evidence="1">The C-terminal SGF11-type zinc-finger domain together with the C-terminal catalytic domain of UBP8 forms the 'catalytic lobe' of the SAGA deubiquitination module.</text>
</comment>
<comment type="similarity">
    <text evidence="1">Belongs to the SGF11 family.</text>
</comment>
<feature type="chain" id="PRO_0000367536" description="SAGA-associated factor 11">
    <location>
        <begin position="1"/>
        <end position="105"/>
    </location>
</feature>
<feature type="zinc finger region" description="SGF11-type" evidence="1">
    <location>
        <begin position="76"/>
        <end position="97"/>
    </location>
</feature>
<keyword id="KW-0010">Activator</keyword>
<keyword id="KW-0156">Chromatin regulator</keyword>
<keyword id="KW-0479">Metal-binding</keyword>
<keyword id="KW-0539">Nucleus</keyword>
<keyword id="KW-1185">Reference proteome</keyword>
<keyword id="KW-0804">Transcription</keyword>
<keyword id="KW-0805">Transcription regulation</keyword>
<keyword id="KW-0862">Zinc</keyword>
<keyword id="KW-0863">Zinc-finger</keyword>